<sequence length="469" mass="53180">MKIKTRFAPSPTGYLHVGGARTALYSWLFSRHAGGEFVLRIEDTDLERSTQDAIDAIMDGMNWLNLDWNEGPYFQTKRFDRYNAVIDDMLVQDTAYKCYCSKERLEALREKQMENGEKPRYDGHCRDSQCSHTDDEPHVVRFRNPQEGSVIFDDKIRGPIEFSNQELDDLIIRRTDGSPTYNFCVVVDDWDMEISHVIRGEDHINNTPRQINILKALGAPVPEYAHVSMILGDDGKKLSKRHGAVGVMQYRDDGYLPQALLNYLVRLGWSHGDQEIFSIDEMKEFFTLEAINKSASAFNTEKLQWLNHHYINHMPAEEVAVHLAWHVEQLGIETRNGPELKDIVKLLGERCKTLKEMAESCRYFYEDFSEFDADAAKKHLRPVARQPLEAVRAKLAAITAWTPENVHDAIQGTADELGVGMGKVGMPLRVAVTGAGQSPGMDVTVHAIGQNRSLQRIDLALAYIAGREA</sequence>
<name>SYE_SERP5</name>
<organism>
    <name type="scientific">Serratia proteamaculans (strain 568)</name>
    <dbReference type="NCBI Taxonomy" id="399741"/>
    <lineage>
        <taxon>Bacteria</taxon>
        <taxon>Pseudomonadati</taxon>
        <taxon>Pseudomonadota</taxon>
        <taxon>Gammaproteobacteria</taxon>
        <taxon>Enterobacterales</taxon>
        <taxon>Yersiniaceae</taxon>
        <taxon>Serratia</taxon>
    </lineage>
</organism>
<gene>
    <name evidence="1" type="primary">gltX</name>
    <name type="ordered locus">Spro_3417</name>
</gene>
<protein>
    <recommendedName>
        <fullName evidence="1">Glutamate--tRNA ligase</fullName>
        <ecNumber evidence="1">6.1.1.17</ecNumber>
    </recommendedName>
    <alternativeName>
        <fullName evidence="1">Glutamyl-tRNA synthetase</fullName>
        <shortName evidence="1">GluRS</shortName>
    </alternativeName>
</protein>
<dbReference type="EC" id="6.1.1.17" evidence="1"/>
<dbReference type="EMBL" id="CP000826">
    <property type="protein sequence ID" value="ABV42515.1"/>
    <property type="molecule type" value="Genomic_DNA"/>
</dbReference>
<dbReference type="SMR" id="A8GHC5"/>
<dbReference type="STRING" id="399741.Spro_3417"/>
<dbReference type="KEGG" id="spe:Spro_3417"/>
<dbReference type="eggNOG" id="COG0008">
    <property type="taxonomic scope" value="Bacteria"/>
</dbReference>
<dbReference type="HOGENOM" id="CLU_015768_6_0_6"/>
<dbReference type="OrthoDB" id="9807503at2"/>
<dbReference type="GO" id="GO:0005829">
    <property type="term" value="C:cytosol"/>
    <property type="evidence" value="ECO:0007669"/>
    <property type="project" value="TreeGrafter"/>
</dbReference>
<dbReference type="GO" id="GO:0005524">
    <property type="term" value="F:ATP binding"/>
    <property type="evidence" value="ECO:0007669"/>
    <property type="project" value="UniProtKB-UniRule"/>
</dbReference>
<dbReference type="GO" id="GO:0004818">
    <property type="term" value="F:glutamate-tRNA ligase activity"/>
    <property type="evidence" value="ECO:0007669"/>
    <property type="project" value="UniProtKB-UniRule"/>
</dbReference>
<dbReference type="GO" id="GO:0000049">
    <property type="term" value="F:tRNA binding"/>
    <property type="evidence" value="ECO:0007669"/>
    <property type="project" value="InterPro"/>
</dbReference>
<dbReference type="GO" id="GO:0008270">
    <property type="term" value="F:zinc ion binding"/>
    <property type="evidence" value="ECO:0007669"/>
    <property type="project" value="UniProtKB-UniRule"/>
</dbReference>
<dbReference type="GO" id="GO:0006424">
    <property type="term" value="P:glutamyl-tRNA aminoacylation"/>
    <property type="evidence" value="ECO:0007669"/>
    <property type="project" value="UniProtKB-UniRule"/>
</dbReference>
<dbReference type="CDD" id="cd00808">
    <property type="entry name" value="GluRS_core"/>
    <property type="match status" value="1"/>
</dbReference>
<dbReference type="FunFam" id="1.10.10.350:FF:000001">
    <property type="entry name" value="Glutamate--tRNA ligase"/>
    <property type="match status" value="1"/>
</dbReference>
<dbReference type="FunFam" id="3.40.50.620:FF:000007">
    <property type="entry name" value="Glutamate--tRNA ligase"/>
    <property type="match status" value="1"/>
</dbReference>
<dbReference type="Gene3D" id="1.10.10.350">
    <property type="match status" value="1"/>
</dbReference>
<dbReference type="Gene3D" id="3.40.50.620">
    <property type="entry name" value="HUPs"/>
    <property type="match status" value="1"/>
</dbReference>
<dbReference type="HAMAP" id="MF_00022">
    <property type="entry name" value="Glu_tRNA_synth_type1"/>
    <property type="match status" value="1"/>
</dbReference>
<dbReference type="InterPro" id="IPR045462">
    <property type="entry name" value="aa-tRNA-synth_I_cd-bd"/>
</dbReference>
<dbReference type="InterPro" id="IPR020751">
    <property type="entry name" value="aa-tRNA-synth_I_codon-bd_sub2"/>
</dbReference>
<dbReference type="InterPro" id="IPR001412">
    <property type="entry name" value="aa-tRNA-synth_I_CS"/>
</dbReference>
<dbReference type="InterPro" id="IPR008925">
    <property type="entry name" value="aa_tRNA-synth_I_cd-bd_sf"/>
</dbReference>
<dbReference type="InterPro" id="IPR004527">
    <property type="entry name" value="Glu-tRNA-ligase_bac/mito"/>
</dbReference>
<dbReference type="InterPro" id="IPR000924">
    <property type="entry name" value="Glu/Gln-tRNA-synth"/>
</dbReference>
<dbReference type="InterPro" id="IPR020058">
    <property type="entry name" value="Glu/Gln-tRNA-synth_Ib_cat-dom"/>
</dbReference>
<dbReference type="InterPro" id="IPR049940">
    <property type="entry name" value="GluQ/Sye"/>
</dbReference>
<dbReference type="InterPro" id="IPR033910">
    <property type="entry name" value="GluRS_core"/>
</dbReference>
<dbReference type="InterPro" id="IPR014729">
    <property type="entry name" value="Rossmann-like_a/b/a_fold"/>
</dbReference>
<dbReference type="NCBIfam" id="TIGR00464">
    <property type="entry name" value="gltX_bact"/>
    <property type="match status" value="1"/>
</dbReference>
<dbReference type="PANTHER" id="PTHR43311">
    <property type="entry name" value="GLUTAMATE--TRNA LIGASE"/>
    <property type="match status" value="1"/>
</dbReference>
<dbReference type="PANTHER" id="PTHR43311:SF2">
    <property type="entry name" value="GLUTAMATE--TRNA LIGASE, MITOCHONDRIAL-RELATED"/>
    <property type="match status" value="1"/>
</dbReference>
<dbReference type="Pfam" id="PF19269">
    <property type="entry name" value="Anticodon_2"/>
    <property type="match status" value="1"/>
</dbReference>
<dbReference type="Pfam" id="PF00749">
    <property type="entry name" value="tRNA-synt_1c"/>
    <property type="match status" value="1"/>
</dbReference>
<dbReference type="PRINTS" id="PR00987">
    <property type="entry name" value="TRNASYNTHGLU"/>
</dbReference>
<dbReference type="SUPFAM" id="SSF48163">
    <property type="entry name" value="An anticodon-binding domain of class I aminoacyl-tRNA synthetases"/>
    <property type="match status" value="1"/>
</dbReference>
<dbReference type="SUPFAM" id="SSF52374">
    <property type="entry name" value="Nucleotidylyl transferase"/>
    <property type="match status" value="1"/>
</dbReference>
<dbReference type="PROSITE" id="PS00178">
    <property type="entry name" value="AA_TRNA_LIGASE_I"/>
    <property type="match status" value="1"/>
</dbReference>
<reference key="1">
    <citation type="submission" date="2007-09" db="EMBL/GenBank/DDBJ databases">
        <title>Complete sequence of chromosome of Serratia proteamaculans 568.</title>
        <authorList>
            <consortium name="US DOE Joint Genome Institute"/>
            <person name="Copeland A."/>
            <person name="Lucas S."/>
            <person name="Lapidus A."/>
            <person name="Barry K."/>
            <person name="Glavina del Rio T."/>
            <person name="Dalin E."/>
            <person name="Tice H."/>
            <person name="Pitluck S."/>
            <person name="Chain P."/>
            <person name="Malfatti S."/>
            <person name="Shin M."/>
            <person name="Vergez L."/>
            <person name="Schmutz J."/>
            <person name="Larimer F."/>
            <person name="Land M."/>
            <person name="Hauser L."/>
            <person name="Kyrpides N."/>
            <person name="Kim E."/>
            <person name="Taghavi S."/>
            <person name="Newman L."/>
            <person name="Vangronsveld J."/>
            <person name="van der Lelie D."/>
            <person name="Richardson P."/>
        </authorList>
    </citation>
    <scope>NUCLEOTIDE SEQUENCE [LARGE SCALE GENOMIC DNA]</scope>
    <source>
        <strain>568</strain>
    </source>
</reference>
<accession>A8GHC5</accession>
<evidence type="ECO:0000255" key="1">
    <source>
        <dbReference type="HAMAP-Rule" id="MF_00022"/>
    </source>
</evidence>
<feature type="chain" id="PRO_1000057202" description="Glutamate--tRNA ligase">
    <location>
        <begin position="1"/>
        <end position="469"/>
    </location>
</feature>
<feature type="short sequence motif" description="'HIGH' region" evidence="1">
    <location>
        <begin position="9"/>
        <end position="19"/>
    </location>
</feature>
<feature type="short sequence motif" description="'KMSKS' region" evidence="1">
    <location>
        <begin position="237"/>
        <end position="241"/>
    </location>
</feature>
<feature type="binding site" evidence="1">
    <location>
        <position position="98"/>
    </location>
    <ligand>
        <name>Zn(2+)</name>
        <dbReference type="ChEBI" id="CHEBI:29105"/>
    </ligand>
</feature>
<feature type="binding site" evidence="1">
    <location>
        <position position="100"/>
    </location>
    <ligand>
        <name>Zn(2+)</name>
        <dbReference type="ChEBI" id="CHEBI:29105"/>
    </ligand>
</feature>
<feature type="binding site" evidence="1">
    <location>
        <position position="125"/>
    </location>
    <ligand>
        <name>Zn(2+)</name>
        <dbReference type="ChEBI" id="CHEBI:29105"/>
    </ligand>
</feature>
<feature type="binding site" evidence="1">
    <location>
        <position position="127"/>
    </location>
    <ligand>
        <name>Zn(2+)</name>
        <dbReference type="ChEBI" id="CHEBI:29105"/>
    </ligand>
</feature>
<feature type="binding site" evidence="1">
    <location>
        <position position="240"/>
    </location>
    <ligand>
        <name>ATP</name>
        <dbReference type="ChEBI" id="CHEBI:30616"/>
    </ligand>
</feature>
<keyword id="KW-0030">Aminoacyl-tRNA synthetase</keyword>
<keyword id="KW-0067">ATP-binding</keyword>
<keyword id="KW-0963">Cytoplasm</keyword>
<keyword id="KW-0436">Ligase</keyword>
<keyword id="KW-0479">Metal-binding</keyword>
<keyword id="KW-0547">Nucleotide-binding</keyword>
<keyword id="KW-0648">Protein biosynthesis</keyword>
<keyword id="KW-0862">Zinc</keyword>
<comment type="function">
    <text evidence="1">Catalyzes the attachment of glutamate to tRNA(Glu) in a two-step reaction: glutamate is first activated by ATP to form Glu-AMP and then transferred to the acceptor end of tRNA(Glu).</text>
</comment>
<comment type="catalytic activity">
    <reaction evidence="1">
        <text>tRNA(Glu) + L-glutamate + ATP = L-glutamyl-tRNA(Glu) + AMP + diphosphate</text>
        <dbReference type="Rhea" id="RHEA:23540"/>
        <dbReference type="Rhea" id="RHEA-COMP:9663"/>
        <dbReference type="Rhea" id="RHEA-COMP:9680"/>
        <dbReference type="ChEBI" id="CHEBI:29985"/>
        <dbReference type="ChEBI" id="CHEBI:30616"/>
        <dbReference type="ChEBI" id="CHEBI:33019"/>
        <dbReference type="ChEBI" id="CHEBI:78442"/>
        <dbReference type="ChEBI" id="CHEBI:78520"/>
        <dbReference type="ChEBI" id="CHEBI:456215"/>
        <dbReference type="EC" id="6.1.1.17"/>
    </reaction>
</comment>
<comment type="cofactor">
    <cofactor evidence="1">
        <name>Zn(2+)</name>
        <dbReference type="ChEBI" id="CHEBI:29105"/>
    </cofactor>
    <text evidence="1">Binds 1 zinc ion per subunit.</text>
</comment>
<comment type="subunit">
    <text evidence="1">Monomer.</text>
</comment>
<comment type="subcellular location">
    <subcellularLocation>
        <location evidence="1">Cytoplasm</location>
    </subcellularLocation>
</comment>
<comment type="similarity">
    <text evidence="1">Belongs to the class-I aminoacyl-tRNA synthetase family. Glutamate--tRNA ligase type 1 subfamily.</text>
</comment>
<proteinExistence type="inferred from homology"/>